<gene>
    <name type="primary">HMGCR</name>
</gene>
<dbReference type="EC" id="1.1.1.34" evidence="7 8"/>
<dbReference type="EMBL" id="M12705">
    <property type="protein sequence ID" value="AAA37077.1"/>
    <property type="molecule type" value="mRNA"/>
</dbReference>
<dbReference type="PIR" id="A23586">
    <property type="entry name" value="A23586"/>
</dbReference>
<dbReference type="RefSeq" id="NP_001268631.1">
    <property type="nucleotide sequence ID" value="NM_001281702.1"/>
</dbReference>
<dbReference type="SMR" id="P09610"/>
<dbReference type="STRING" id="10036.ENSMAUP00000011794"/>
<dbReference type="BindingDB" id="P09610"/>
<dbReference type="ChEMBL" id="CHEMBL1075267"/>
<dbReference type="GlyCosmos" id="P09610">
    <property type="glycosylation" value="1 site, No reported glycans"/>
</dbReference>
<dbReference type="iPTMnet" id="P09610"/>
<dbReference type="GeneID" id="101843185"/>
<dbReference type="KEGG" id="maua:101843185"/>
<dbReference type="CTD" id="3156"/>
<dbReference type="eggNOG" id="KOG2480">
    <property type="taxonomic scope" value="Eukaryota"/>
</dbReference>
<dbReference type="OrthoDB" id="310654at2759"/>
<dbReference type="SABIO-RK" id="P09610"/>
<dbReference type="UniPathway" id="UPA00058">
    <property type="reaction ID" value="UER00103"/>
</dbReference>
<dbReference type="PRO" id="PR:P09610"/>
<dbReference type="Proteomes" id="UP000189706">
    <property type="component" value="Unplaced"/>
</dbReference>
<dbReference type="GO" id="GO:0005783">
    <property type="term" value="C:endoplasmic reticulum"/>
    <property type="evidence" value="ECO:0000250"/>
    <property type="project" value="UniProtKB"/>
</dbReference>
<dbReference type="GO" id="GO:0005789">
    <property type="term" value="C:endoplasmic reticulum membrane"/>
    <property type="evidence" value="ECO:0007669"/>
    <property type="project" value="UniProtKB-SubCell"/>
</dbReference>
<dbReference type="GO" id="GO:0005778">
    <property type="term" value="C:peroxisomal membrane"/>
    <property type="evidence" value="ECO:0000250"/>
    <property type="project" value="UniProtKB"/>
</dbReference>
<dbReference type="GO" id="GO:0004420">
    <property type="term" value="F:hydroxymethylglutaryl-CoA reductase (NADPH) activity"/>
    <property type="evidence" value="ECO:0007669"/>
    <property type="project" value="UniProtKB-EC"/>
</dbReference>
<dbReference type="GO" id="GO:0050661">
    <property type="term" value="F:NADP binding"/>
    <property type="evidence" value="ECO:0007669"/>
    <property type="project" value="InterPro"/>
</dbReference>
<dbReference type="GO" id="GO:0006695">
    <property type="term" value="P:cholesterol biosynthetic process"/>
    <property type="evidence" value="ECO:0007669"/>
    <property type="project" value="UniProtKB-KW"/>
</dbReference>
<dbReference type="GO" id="GO:0015936">
    <property type="term" value="P:coenzyme A metabolic process"/>
    <property type="evidence" value="ECO:0007669"/>
    <property type="project" value="InterPro"/>
</dbReference>
<dbReference type="GO" id="GO:0008299">
    <property type="term" value="P:isoprenoid biosynthetic process"/>
    <property type="evidence" value="ECO:0007669"/>
    <property type="project" value="InterPro"/>
</dbReference>
<dbReference type="CDD" id="cd00643">
    <property type="entry name" value="HMG-CoA_reductase_classI"/>
    <property type="match status" value="1"/>
</dbReference>
<dbReference type="FunFam" id="1.10.3270.10:FF:000001">
    <property type="entry name" value="3-hydroxy-3-methylglutaryl coenzyme A reductase"/>
    <property type="match status" value="1"/>
</dbReference>
<dbReference type="FunFam" id="3.30.70.420:FF:000001">
    <property type="entry name" value="3-hydroxy-3-methylglutaryl coenzyme A reductase"/>
    <property type="match status" value="1"/>
</dbReference>
<dbReference type="FunFam" id="3.90.770.10:FF:000002">
    <property type="entry name" value="3-hydroxy-3-methylglutaryl coenzyme A reductase"/>
    <property type="match status" value="1"/>
</dbReference>
<dbReference type="Gene3D" id="3.90.770.10">
    <property type="entry name" value="3-hydroxy-3-methylglutaryl-coenzyme A Reductase, Chain A, domain 2"/>
    <property type="match status" value="1"/>
</dbReference>
<dbReference type="Gene3D" id="1.10.3270.10">
    <property type="entry name" value="HMGR, N-terminal domain"/>
    <property type="match status" value="1"/>
</dbReference>
<dbReference type="Gene3D" id="3.30.70.420">
    <property type="entry name" value="Hydroxymethylglutaryl-CoA reductase, class I/II, NAD/NADP-binding domain"/>
    <property type="match status" value="1"/>
</dbReference>
<dbReference type="InterPro" id="IPR002202">
    <property type="entry name" value="HMG_CoA_Rdtase"/>
</dbReference>
<dbReference type="InterPro" id="IPR023074">
    <property type="entry name" value="HMG_CoA_Rdtase_cat_sf"/>
</dbReference>
<dbReference type="InterPro" id="IPR023076">
    <property type="entry name" value="HMG_CoA_Rdtase_CS"/>
</dbReference>
<dbReference type="InterPro" id="IPR004554">
    <property type="entry name" value="HMG_CoA_Rdtase_eu_arc"/>
</dbReference>
<dbReference type="InterPro" id="IPR004816">
    <property type="entry name" value="HMG_CoA_Rdtase_metazoan"/>
</dbReference>
<dbReference type="InterPro" id="IPR023282">
    <property type="entry name" value="HMG_CoA_Rdtase_N"/>
</dbReference>
<dbReference type="InterPro" id="IPR009023">
    <property type="entry name" value="HMG_CoA_Rdtase_NAD(P)-bd_sf"/>
</dbReference>
<dbReference type="InterPro" id="IPR009029">
    <property type="entry name" value="HMG_CoA_Rdtase_sub-bd_dom_sf"/>
</dbReference>
<dbReference type="InterPro" id="IPR053958">
    <property type="entry name" value="HMGCR/SNAP/NPC1-like_SSD"/>
</dbReference>
<dbReference type="InterPro" id="IPR000731">
    <property type="entry name" value="SSD"/>
</dbReference>
<dbReference type="NCBIfam" id="TIGR00920">
    <property type="entry name" value="2A060605"/>
    <property type="match status" value="1"/>
</dbReference>
<dbReference type="NCBIfam" id="TIGR00533">
    <property type="entry name" value="HMG_CoA_R_NADP"/>
    <property type="match status" value="1"/>
</dbReference>
<dbReference type="PANTHER" id="PTHR10572">
    <property type="entry name" value="3-HYDROXY-3-METHYLGLUTARYL-COENZYME A REDUCTASE"/>
    <property type="match status" value="1"/>
</dbReference>
<dbReference type="PANTHER" id="PTHR10572:SF24">
    <property type="entry name" value="3-HYDROXY-3-METHYLGLUTARYL-COENZYME A REDUCTASE"/>
    <property type="match status" value="1"/>
</dbReference>
<dbReference type="Pfam" id="PF00368">
    <property type="entry name" value="HMG-CoA_red"/>
    <property type="match status" value="1"/>
</dbReference>
<dbReference type="Pfam" id="PF12349">
    <property type="entry name" value="Sterol-sensing"/>
    <property type="match status" value="1"/>
</dbReference>
<dbReference type="PRINTS" id="PR00071">
    <property type="entry name" value="HMGCOARDTASE"/>
</dbReference>
<dbReference type="SUPFAM" id="SSF82866">
    <property type="entry name" value="Multidrug efflux transporter AcrB transmembrane domain"/>
    <property type="match status" value="1"/>
</dbReference>
<dbReference type="SUPFAM" id="SSF55035">
    <property type="entry name" value="NAD-binding domain of HMG-CoA reductase"/>
    <property type="match status" value="1"/>
</dbReference>
<dbReference type="SUPFAM" id="SSF56542">
    <property type="entry name" value="Substrate-binding domain of HMG-CoA reductase"/>
    <property type="match status" value="1"/>
</dbReference>
<dbReference type="PROSITE" id="PS00066">
    <property type="entry name" value="HMG_COA_REDUCTASE_1"/>
    <property type="match status" value="1"/>
</dbReference>
<dbReference type="PROSITE" id="PS00318">
    <property type="entry name" value="HMG_COA_REDUCTASE_2"/>
    <property type="match status" value="1"/>
</dbReference>
<dbReference type="PROSITE" id="PS01192">
    <property type="entry name" value="HMG_COA_REDUCTASE_3"/>
    <property type="match status" value="1"/>
</dbReference>
<dbReference type="PROSITE" id="PS50065">
    <property type="entry name" value="HMG_COA_REDUCTASE_4"/>
    <property type="match status" value="1"/>
</dbReference>
<dbReference type="PROSITE" id="PS50156">
    <property type="entry name" value="SSD"/>
    <property type="match status" value="1"/>
</dbReference>
<comment type="function">
    <text evidence="7 8">Catalyzes the conversion of (3S)-hydroxy-3-methylglutaryl-CoA (HMG-CoA) to mevalonic acid, the rate-limiting step in the synthesis of cholesterol and other isoprenoids, thus plays a critical role in cellular cholesterol homeostasis.</text>
</comment>
<comment type="catalytic activity">
    <reaction evidence="7 8">
        <text>(R)-mevalonate + 2 NADP(+) + CoA = (3S)-3-hydroxy-3-methylglutaryl-CoA + 2 NADPH + 2 H(+)</text>
        <dbReference type="Rhea" id="RHEA:15989"/>
        <dbReference type="ChEBI" id="CHEBI:15378"/>
        <dbReference type="ChEBI" id="CHEBI:36464"/>
        <dbReference type="ChEBI" id="CHEBI:43074"/>
        <dbReference type="ChEBI" id="CHEBI:57287"/>
        <dbReference type="ChEBI" id="CHEBI:57783"/>
        <dbReference type="ChEBI" id="CHEBI:58349"/>
        <dbReference type="EC" id="1.1.1.34"/>
    </reaction>
    <physiologicalReaction direction="right-to-left" evidence="10">
        <dbReference type="Rhea" id="RHEA:15991"/>
    </physiologicalReaction>
</comment>
<comment type="activity regulation">
    <text evidence="1 2">Regulated by a negative feedback mechanism through sterols and non-sterol metabolites derived from mevalonate (By similarity). Phosphorylation at Ser-871 down-regulates the catalytic activity (By similarity).</text>
</comment>
<comment type="pathway">
    <text>Metabolic intermediate biosynthesis; (R)-mevalonate biosynthesis; (R)-mevalonate from acetyl-CoA: step 3/3.</text>
</comment>
<comment type="subunit">
    <text evidence="2">Homotetramer. Homodimer. Interacts (via its SSD) with INSIG1; the interaction, accelerated by sterols, leads to the recruitment of HMGCR to AMFR/gp78 for its ubiquitination by the sterol-mediated ERAD pathway. Interacts with UBIAD1.</text>
</comment>
<comment type="subcellular location">
    <subcellularLocation>
        <location evidence="2">Endoplasmic reticulum membrane</location>
        <topology evidence="1">Multi-pass membrane protein</topology>
    </subcellularLocation>
    <subcellularLocation>
        <location evidence="2">Peroxisome membrane</location>
        <topology evidence="1">Multi-pass membrane protein</topology>
    </subcellularLocation>
</comment>
<comment type="PTM">
    <text evidence="2">Undergoes sterol-mediated ubiquitination and ER-associated degradation (ERAD). Accumulation of sterols in the endoplasmic reticulum (ER) membrane, triggers binding of the reductase to the ER membrane protein INSIG1 or INSIG2. The INSIG1 binding leads to the recruitment of the ubiquitin ligase, AMFR/gp78, RNF139 or RNF145, initiating ubiquitination of the reductase. The ubiquitinated reductase is then extracted from the ER membrane and delivered to cytosolic 26S proteosomes by a mechanism probably mediated by the ATPase Valosin-containing protein VCP/p97. The INSIG2-binding leads to the recruitment of the ubiquitin ligase RNF139, initiating ubiquitination of the reductase. Lys-248 is the main site of ubiquitination. Ubiquitination is enhanced by the presence of a geranylgeranylated protein.</text>
</comment>
<comment type="PTM">
    <text evidence="2">N-glycosylated. Deglycosylated by NGLY1 on release from the endoplasmic reticulum (ER) in a sterol-mediated manner.</text>
</comment>
<comment type="PTM">
    <text evidence="1">Phosphorylated. Phosphorylation at Ser-871 reduces the catalytic activity.</text>
</comment>
<comment type="similarity">
    <text evidence="9">Belongs to the HMG-CoA reductase family.</text>
</comment>
<feature type="chain" id="PRO_0000114420" description="3-hydroxy-3-methylglutaryl-coenzyme A reductase">
    <location>
        <begin position="1"/>
        <end position="887"/>
    </location>
</feature>
<feature type="topological domain" description="Cytoplasmic" evidence="1">
    <location>
        <begin position="1"/>
        <end position="9"/>
    </location>
</feature>
<feature type="transmembrane region" description="Helical" evidence="1">
    <location>
        <begin position="10"/>
        <end position="39"/>
    </location>
</feature>
<feature type="topological domain" description="Lumenal" evidence="1">
    <location>
        <begin position="40"/>
        <end position="56"/>
    </location>
</feature>
<feature type="transmembrane region" description="Helical" evidence="1">
    <location>
        <begin position="57"/>
        <end position="78"/>
    </location>
</feature>
<feature type="topological domain" description="Cytoplasmic" evidence="1">
    <location>
        <begin position="79"/>
        <end position="89"/>
    </location>
</feature>
<feature type="transmembrane region" description="Helical" evidence="1">
    <location>
        <begin position="90"/>
        <end position="114"/>
    </location>
</feature>
<feature type="topological domain" description="Lumenal" evidence="1">
    <location>
        <begin position="115"/>
        <end position="123"/>
    </location>
</feature>
<feature type="transmembrane region" description="Helical" evidence="1">
    <location>
        <begin position="124"/>
        <end position="149"/>
    </location>
</feature>
<feature type="topological domain" description="Cytoplasmic" evidence="1">
    <location>
        <begin position="150"/>
        <end position="159"/>
    </location>
</feature>
<feature type="transmembrane region" description="Helical" evidence="1">
    <location>
        <begin position="160"/>
        <end position="187"/>
    </location>
</feature>
<feature type="topological domain" description="Lumenal" evidence="1">
    <location>
        <begin position="188"/>
        <end position="191"/>
    </location>
</feature>
<feature type="transmembrane region" description="Helical" evidence="1">
    <location>
        <begin position="192"/>
        <end position="220"/>
    </location>
</feature>
<feature type="topological domain" description="Cytoplasmic" evidence="1">
    <location>
        <begin position="221"/>
        <end position="248"/>
    </location>
</feature>
<feature type="transmembrane region" description="Helical" evidence="1">
    <location>
        <begin position="249"/>
        <end position="275"/>
    </location>
</feature>
<feature type="topological domain" description="Lumenal" evidence="1">
    <location>
        <begin position="276"/>
        <end position="314"/>
    </location>
</feature>
<feature type="transmembrane region" description="Helical" evidence="1">
    <location>
        <begin position="315"/>
        <end position="339"/>
    </location>
</feature>
<feature type="topological domain" description="Cytoplasmic" evidence="1">
    <location>
        <begin position="340"/>
        <end position="887"/>
    </location>
</feature>
<feature type="domain" description="SSD" evidence="5">
    <location>
        <begin position="61"/>
        <end position="218"/>
    </location>
</feature>
<feature type="short sequence motif" description="INSIG-binding motif" evidence="2">
    <location>
        <begin position="75"/>
        <end position="78"/>
    </location>
</feature>
<feature type="active site" description="Charge relay system" evidence="2 7">
    <location>
        <position position="558"/>
    </location>
</feature>
<feature type="active site" description="Charge relay system" evidence="2">
    <location>
        <position position="690"/>
    </location>
</feature>
<feature type="active site" description="Charge relay system" evidence="2 7">
    <location>
        <position position="766"/>
    </location>
</feature>
<feature type="active site" description="Proton donor" evidence="6 8">
    <location>
        <position position="865"/>
    </location>
</feature>
<feature type="modified residue" description="Phosphoserine; by AMPK" evidence="3">
    <location>
        <position position="871"/>
    </location>
</feature>
<feature type="glycosylation site" description="N-linked (GlcNAc...) asparagine" evidence="4">
    <location>
        <position position="281"/>
    </location>
</feature>
<feature type="cross-link" description="Glycyl lysine isopeptide (Lys-Gly) (interchain with G-Cter in ubiquitin)" evidence="1">
    <location>
        <position position="89"/>
    </location>
</feature>
<feature type="cross-link" description="Glycyl lysine isopeptide (Lys-Gly) (interchain with G-Cter in ubiquitin)" evidence="1">
    <location>
        <position position="248"/>
    </location>
</feature>
<feature type="mutagenesis site" description="No loss of activity." evidence="8">
    <original>H</original>
    <variation>Q</variation>
    <location>
        <position position="474"/>
    </location>
</feature>
<feature type="mutagenesis site" description="No loss of activity." evidence="8">
    <original>H</original>
    <variation>Q</variation>
    <location>
        <position position="487"/>
    </location>
</feature>
<feature type="mutagenesis site" description="Loss of activity." evidence="7">
    <original>E</original>
    <variation>D</variation>
    <variation>Q</variation>
    <location>
        <position position="558"/>
    </location>
</feature>
<feature type="mutagenesis site" description="No loss of activity." evidence="8">
    <original>H</original>
    <variation>Q</variation>
    <location>
        <position position="751"/>
    </location>
</feature>
<feature type="mutagenesis site" description="Loss of activity." evidence="7">
    <original>D</original>
    <variation>N</variation>
    <location>
        <position position="766"/>
    </location>
</feature>
<feature type="mutagenesis site" description="No loss of activity." evidence="8">
    <original>H</original>
    <variation>Q</variation>
    <location>
        <position position="860"/>
    </location>
</feature>
<feature type="mutagenesis site" description="Loss of activity." evidence="8">
    <original>H</original>
    <variation>K</variation>
    <variation>Q</variation>
    <location>
        <position position="865"/>
    </location>
</feature>
<feature type="mutagenesis site" description="No loss of activity." evidence="8">
    <original>H</original>
    <variation>Y</variation>
    <location>
        <position position="868"/>
    </location>
</feature>
<accession>P09610</accession>
<reference key="1">
    <citation type="journal article" date="1985" name="DNA">
        <title>The nucleotide sequence of Syrian hamster HMG-CoA reductase cDNA.</title>
        <authorList>
            <person name="Skalnik D.G."/>
            <person name="Simoni R.D."/>
        </authorList>
    </citation>
    <scope>NUCLEOTIDE SEQUENCE [MRNA]</scope>
</reference>
<reference key="2">
    <citation type="journal article" date="1993" name="J. Biol. Chem.">
        <title>His865 is the catalytically important histidyl residue of Syrian hamster 3-hydroxy-3-methylglutaryl-coenzyme A reductase.</title>
        <authorList>
            <person name="Darnay B.G."/>
            <person name="Rodwell V.W."/>
        </authorList>
    </citation>
    <scope>ACTIVE SITES</scope>
    <scope>MUTAGENESIS OF HIS-474; HIS-487; HIS-751; HIS-860; HIS-865 AND HIS-868</scope>
    <scope>CATALYTIC ACTIVITY</scope>
    <scope>FUNCTION</scope>
</reference>
<reference key="3">
    <citation type="journal article" date="1994" name="J. Biol. Chem.">
        <title>The active site of hamster 3-hydroxy-3-methylglutaryl-CoA reductase resides at the subunit interface and incorporates catalytically essential acidic residues from separate polypeptides.</title>
        <authorList>
            <person name="Frimpong K."/>
            <person name="Rodwell V.W."/>
        </authorList>
    </citation>
    <scope>ACTIVE SITES</scope>
    <scope>SUBUNIT</scope>
    <scope>MUTAGENESIS OF GLU-558 AND ASP-766</scope>
    <scope>CATALYTIC ACTIVITY</scope>
    <scope>FUNCTION</scope>
</reference>
<sequence length="887" mass="96955">MLSRLFRMHGLFVASHPWEVIVGTVTLTICMMSMNMFTGNNKICGWNYECPKFEEDVLSSDIIILTITRCIAILYIYFQFQNLRQLGSKYILGIAGLFTIFSSFVFSTVVIHFLDKELTGLNEALPFFLLLIDLSRASALAKFALSSNSQDEVRENIARGMAILGPTFTLDALVECLVIGVGTMSGVRQLEIMCCFGCMSVLANYFVFMTFFPACVSLVLELSRESREGRPIWQLSHFARVLEEEENKPNPVTQRVKMIMSLGLVLVHAHSRWIADPSPQNSTTEHSKVSLGLDEDVSKRIEPSVSLWQFYLSKMISMDIEQVVTLSLAFLLAVKYIFFEQAETESTLSLKNPITSPVATPKKAPDNCCRREPVLSRRNEKLSSVEEEPGVNQDRKVEVIKPLVAETESTSRATFVLGASGGCSPVALGTQEPEIELPSEPRPNEECLQILESAEKGAKFLSDAEIIQLVNAKHIPAYKLETLMETHERGVSIRRQLLSTKLPEPSSLQYLPYRDYNYSLVMGACCENVIGYMPIPVGVAGPLCLDGKEYQVPMATTEGCLVASTNRGCRAIGLGGGASSRVLADGMTRGPVVRLPRACDSAEVKAWLETPEGFAVIKDAFDSTSRFARLQKLHVTMAGRNLYIRFQSKTGDAMGMNMISKGTEKALVKLQEFFPEMQILAVSGNYCTDKKPAAVNWIEGRGKTVVCEAVIPARVVREVLKTTTEAMIDVNINKNLVGSAMAGSIGGYNAHAANIVTAIYIACGQDAAQNVGSSNCITLMEASGPTNEDLYISCTMPSIEIGTVGGGTNLLPQQACLQMLGVQGACKDNPGENARQLARIVCGTVMAGELSLMAALAAGHLVRSHMVHNRSKINLQDLQGTCTKKAA</sequence>
<name>HMDH_MESAU</name>
<proteinExistence type="evidence at protein level"/>
<organism>
    <name type="scientific">Mesocricetus auratus</name>
    <name type="common">Golden hamster</name>
    <dbReference type="NCBI Taxonomy" id="10036"/>
    <lineage>
        <taxon>Eukaryota</taxon>
        <taxon>Metazoa</taxon>
        <taxon>Chordata</taxon>
        <taxon>Craniata</taxon>
        <taxon>Vertebrata</taxon>
        <taxon>Euteleostomi</taxon>
        <taxon>Mammalia</taxon>
        <taxon>Eutheria</taxon>
        <taxon>Euarchontoglires</taxon>
        <taxon>Glires</taxon>
        <taxon>Rodentia</taxon>
        <taxon>Myomorpha</taxon>
        <taxon>Muroidea</taxon>
        <taxon>Cricetidae</taxon>
        <taxon>Cricetinae</taxon>
        <taxon>Mesocricetus</taxon>
    </lineage>
</organism>
<keyword id="KW-0152">Cholesterol biosynthesis</keyword>
<keyword id="KW-0153">Cholesterol metabolism</keyword>
<keyword id="KW-0256">Endoplasmic reticulum</keyword>
<keyword id="KW-0325">Glycoprotein</keyword>
<keyword id="KW-1017">Isopeptide bond</keyword>
<keyword id="KW-0444">Lipid biosynthesis</keyword>
<keyword id="KW-0443">Lipid metabolism</keyword>
<keyword id="KW-0472">Membrane</keyword>
<keyword id="KW-0521">NADP</keyword>
<keyword id="KW-0560">Oxidoreductase</keyword>
<keyword id="KW-0576">Peroxisome</keyword>
<keyword id="KW-0597">Phosphoprotein</keyword>
<keyword id="KW-1185">Reference proteome</keyword>
<keyword id="KW-0752">Steroid biosynthesis</keyword>
<keyword id="KW-0753">Steroid metabolism</keyword>
<keyword id="KW-0756">Sterol biosynthesis</keyword>
<keyword id="KW-1207">Sterol metabolism</keyword>
<keyword id="KW-0812">Transmembrane</keyword>
<keyword id="KW-1133">Transmembrane helix</keyword>
<keyword id="KW-0832">Ubl conjugation</keyword>
<protein>
    <recommendedName>
        <fullName>3-hydroxy-3-methylglutaryl-coenzyme A reductase</fullName>
        <shortName>HMG-CoA reductase</shortName>
        <ecNumber evidence="7 8">1.1.1.34</ecNumber>
    </recommendedName>
</protein>
<evidence type="ECO:0000250" key="1">
    <source>
        <dbReference type="UniProtKB" id="P00347"/>
    </source>
</evidence>
<evidence type="ECO:0000250" key="2">
    <source>
        <dbReference type="UniProtKB" id="P04035"/>
    </source>
</evidence>
<evidence type="ECO:0000250" key="3">
    <source>
        <dbReference type="UniProtKB" id="P51639"/>
    </source>
</evidence>
<evidence type="ECO:0000255" key="4"/>
<evidence type="ECO:0000255" key="5">
    <source>
        <dbReference type="PROSITE-ProRule" id="PRU00199"/>
    </source>
</evidence>
<evidence type="ECO:0000255" key="6">
    <source>
        <dbReference type="PROSITE-ProRule" id="PRU10003"/>
    </source>
</evidence>
<evidence type="ECO:0000269" key="7">
    <source>
    </source>
</evidence>
<evidence type="ECO:0000269" key="8">
    <source>
    </source>
</evidence>
<evidence type="ECO:0000305" key="9"/>
<evidence type="ECO:0000305" key="10">
    <source>
    </source>
</evidence>